<comment type="similarity">
    <text evidence="1">Belongs to the CinA family.</text>
</comment>
<reference key="1">
    <citation type="journal article" date="2002" name="J. Bacteriol.">
        <title>Genome sequence and analysis of the oral bacterium Fusobacterium nucleatum strain ATCC 25586.</title>
        <authorList>
            <person name="Kapatral V."/>
            <person name="Anderson I."/>
            <person name="Ivanova N."/>
            <person name="Reznik G."/>
            <person name="Los T."/>
            <person name="Lykidis A."/>
            <person name="Bhattacharyya A."/>
            <person name="Bartman A."/>
            <person name="Gardner W."/>
            <person name="Grechkin G."/>
            <person name="Zhu L."/>
            <person name="Vasieva O."/>
            <person name="Chu L."/>
            <person name="Kogan Y."/>
            <person name="Chaga O."/>
            <person name="Goltsman E."/>
            <person name="Bernal A."/>
            <person name="Larsen N."/>
            <person name="D'Souza M."/>
            <person name="Walunas T."/>
            <person name="Pusch G."/>
            <person name="Haselkorn R."/>
            <person name="Fonstein M."/>
            <person name="Kyrpides N.C."/>
            <person name="Overbeek R."/>
        </authorList>
    </citation>
    <scope>NUCLEOTIDE SEQUENCE [LARGE SCALE GENOMIC DNA]</scope>
    <source>
        <strain>ATCC 25586 / DSM 15643 / BCRC 10681 / CIP 101130 / JCM 8532 / KCTC 2640 / LMG 13131 / VPI 4355</strain>
    </source>
</reference>
<accession>Q8RHR9</accession>
<proteinExistence type="inferred from homology"/>
<keyword id="KW-1185">Reference proteome</keyword>
<gene>
    <name type="ordered locus">FN1929</name>
</gene>
<feature type="chain" id="PRO_0000336501" description="CinA-like protein">
    <location>
        <begin position="1"/>
        <end position="402"/>
    </location>
</feature>
<dbReference type="EMBL" id="AE009951">
    <property type="protein sequence ID" value="AAL94028.1"/>
    <property type="molecule type" value="Genomic_DNA"/>
</dbReference>
<dbReference type="RefSeq" id="NP_602729.1">
    <property type="nucleotide sequence ID" value="NC_003454.1"/>
</dbReference>
<dbReference type="RefSeq" id="WP_011015925.1">
    <property type="nucleotide sequence ID" value="NZ_CP028101.1"/>
</dbReference>
<dbReference type="SMR" id="Q8RHR9"/>
<dbReference type="FunCoup" id="Q8RHR9">
    <property type="interactions" value="130"/>
</dbReference>
<dbReference type="STRING" id="190304.FN1929"/>
<dbReference type="PaxDb" id="190304-FN1929"/>
<dbReference type="EnsemblBacteria" id="AAL94028">
    <property type="protein sequence ID" value="AAL94028"/>
    <property type="gene ID" value="FN1929"/>
</dbReference>
<dbReference type="GeneID" id="79783054"/>
<dbReference type="KEGG" id="fnu:FN1929"/>
<dbReference type="PATRIC" id="fig|190304.8.peg.404"/>
<dbReference type="eggNOG" id="COG1058">
    <property type="taxonomic scope" value="Bacteria"/>
</dbReference>
<dbReference type="eggNOG" id="COG1546">
    <property type="taxonomic scope" value="Bacteria"/>
</dbReference>
<dbReference type="HOGENOM" id="CLU_030805_9_3_0"/>
<dbReference type="InParanoid" id="Q8RHR9"/>
<dbReference type="BioCyc" id="FNUC190304:G1FZS-423-MONOMER"/>
<dbReference type="Proteomes" id="UP000002521">
    <property type="component" value="Chromosome"/>
</dbReference>
<dbReference type="CDD" id="cd00885">
    <property type="entry name" value="cinA"/>
    <property type="match status" value="1"/>
</dbReference>
<dbReference type="Gene3D" id="3.90.950.20">
    <property type="entry name" value="CinA-like"/>
    <property type="match status" value="1"/>
</dbReference>
<dbReference type="Gene3D" id="3.40.980.10">
    <property type="entry name" value="MoaB/Mog-like domain"/>
    <property type="match status" value="1"/>
</dbReference>
<dbReference type="HAMAP" id="MF_00226_B">
    <property type="entry name" value="CinA_B"/>
    <property type="match status" value="1"/>
</dbReference>
<dbReference type="InterPro" id="IPR050101">
    <property type="entry name" value="CinA"/>
</dbReference>
<dbReference type="InterPro" id="IPR036653">
    <property type="entry name" value="CinA-like_C"/>
</dbReference>
<dbReference type="InterPro" id="IPR008136">
    <property type="entry name" value="CinA_C"/>
</dbReference>
<dbReference type="InterPro" id="IPR008135">
    <property type="entry name" value="Competence-induced_CinA"/>
</dbReference>
<dbReference type="InterPro" id="IPR036425">
    <property type="entry name" value="MoaB/Mog-like_dom_sf"/>
</dbReference>
<dbReference type="InterPro" id="IPR001453">
    <property type="entry name" value="MoaB/Mog_dom"/>
</dbReference>
<dbReference type="NCBIfam" id="TIGR00200">
    <property type="entry name" value="cinA_nterm"/>
    <property type="match status" value="1"/>
</dbReference>
<dbReference type="NCBIfam" id="TIGR00199">
    <property type="entry name" value="PncC_domain"/>
    <property type="match status" value="1"/>
</dbReference>
<dbReference type="PANTHER" id="PTHR13939">
    <property type="entry name" value="NICOTINAMIDE-NUCLEOTIDE AMIDOHYDROLASE PNCC"/>
    <property type="match status" value="1"/>
</dbReference>
<dbReference type="PANTHER" id="PTHR13939:SF0">
    <property type="entry name" value="NMN AMIDOHYDROLASE-LIKE PROTEIN YFAY"/>
    <property type="match status" value="1"/>
</dbReference>
<dbReference type="Pfam" id="PF02464">
    <property type="entry name" value="CinA"/>
    <property type="match status" value="1"/>
</dbReference>
<dbReference type="Pfam" id="PF00994">
    <property type="entry name" value="MoCF_biosynth"/>
    <property type="match status" value="1"/>
</dbReference>
<dbReference type="PIRSF" id="PIRSF006728">
    <property type="entry name" value="CinA"/>
    <property type="match status" value="1"/>
</dbReference>
<dbReference type="SMART" id="SM00852">
    <property type="entry name" value="MoCF_biosynth"/>
    <property type="match status" value="1"/>
</dbReference>
<dbReference type="SUPFAM" id="SSF142433">
    <property type="entry name" value="CinA-like"/>
    <property type="match status" value="1"/>
</dbReference>
<dbReference type="SUPFAM" id="SSF53218">
    <property type="entry name" value="Molybdenum cofactor biosynthesis proteins"/>
    <property type="match status" value="1"/>
</dbReference>
<name>CINAL_FUSNN</name>
<protein>
    <recommendedName>
        <fullName evidence="1">CinA-like protein</fullName>
    </recommendedName>
</protein>
<organism>
    <name type="scientific">Fusobacterium nucleatum subsp. nucleatum (strain ATCC 25586 / DSM 15643 / BCRC 10681 / CIP 101130 / JCM 8532 / KCTC 2640 / LMG 13131 / VPI 4355)</name>
    <dbReference type="NCBI Taxonomy" id="190304"/>
    <lineage>
        <taxon>Bacteria</taxon>
        <taxon>Fusobacteriati</taxon>
        <taxon>Fusobacteriota</taxon>
        <taxon>Fusobacteriia</taxon>
        <taxon>Fusobacteriales</taxon>
        <taxon>Fusobacteriaceae</taxon>
        <taxon>Fusobacterium</taxon>
    </lineage>
</organism>
<evidence type="ECO:0000255" key="1">
    <source>
        <dbReference type="HAMAP-Rule" id="MF_00226"/>
    </source>
</evidence>
<sequence>MKAGIFLVGTELLNGATIDTNSIYIAEELNKYGIEIEFKMTVRDVMSEITKALTYAKKNVDLVILTGGLGPTDDDITKEAMAKFLKKKLVVDEKEKKELLKKYKAYKNPNKTNFKEVEKPEGAVSFKNDVGMAPAVYIDGMVAFPGFPNELKNMFPKFLKYYVKENNLKSQIYIKDIITYGIGESVLETTVKDLFTEGDIFYEFLVKDYGTLIRLQTKIENKKNVAKIVKKLYNRISEFIIGEDDDRIENTIYECLNLGEKPLTISTAESCTGGMVASKLIEVPGISENFIESIVSYSNEAKIKRLKVKKETLEKYGAVSEEVAREMLAGLKTDIGISTTGIAGPGGGTKDKPVGLVYIGIKVKNEVKVFKRELKGDRNKIRQRAMMHALYNLLKILSKKVR</sequence>